<dbReference type="EMBL" id="CR861339">
    <property type="protein sequence ID" value="CAH93402.1"/>
    <property type="molecule type" value="mRNA"/>
</dbReference>
<dbReference type="RefSeq" id="NP_001127661.1">
    <property type="nucleotide sequence ID" value="NM_001134189.1"/>
</dbReference>
<dbReference type="SMR" id="Q5R4B4"/>
<dbReference type="FunCoup" id="Q5R4B4">
    <property type="interactions" value="288"/>
</dbReference>
<dbReference type="STRING" id="9601.ENSPPYP00000010269"/>
<dbReference type="GeneID" id="100174743"/>
<dbReference type="KEGG" id="pon:100174743"/>
<dbReference type="CTD" id="84064"/>
<dbReference type="eggNOG" id="KOG3040">
    <property type="taxonomic scope" value="Eukaryota"/>
</dbReference>
<dbReference type="HOGENOM" id="CLU_043473_4_0_1"/>
<dbReference type="InParanoid" id="Q5R4B4"/>
<dbReference type="OrthoDB" id="426235at2759"/>
<dbReference type="TreeFam" id="TF314344"/>
<dbReference type="Proteomes" id="UP000001595">
    <property type="component" value="Chromosome 18"/>
</dbReference>
<dbReference type="GO" id="GO:0005737">
    <property type="term" value="C:cytoplasm"/>
    <property type="evidence" value="ECO:0007669"/>
    <property type="project" value="TreeGrafter"/>
</dbReference>
<dbReference type="GO" id="GO:0019899">
    <property type="term" value="F:enzyme binding"/>
    <property type="evidence" value="ECO:0000250"/>
    <property type="project" value="CAFA"/>
</dbReference>
<dbReference type="GO" id="GO:0046872">
    <property type="term" value="F:metal ion binding"/>
    <property type="evidence" value="ECO:0007669"/>
    <property type="project" value="UniProtKB-KW"/>
</dbReference>
<dbReference type="GO" id="GO:0016791">
    <property type="term" value="F:phosphatase activity"/>
    <property type="evidence" value="ECO:0007669"/>
    <property type="project" value="InterPro"/>
</dbReference>
<dbReference type="CDD" id="cd07509">
    <property type="entry name" value="HAD_PPase"/>
    <property type="match status" value="1"/>
</dbReference>
<dbReference type="FunFam" id="3.40.50.1000:FF:000452">
    <property type="entry name" value="Haloacid dehalogenase-like hydrolase domain-containing protein 2"/>
    <property type="match status" value="2"/>
</dbReference>
<dbReference type="Gene3D" id="3.40.50.1000">
    <property type="entry name" value="HAD superfamily/HAD-like"/>
    <property type="match status" value="2"/>
</dbReference>
<dbReference type="InterPro" id="IPR036412">
    <property type="entry name" value="HAD-like_sf"/>
</dbReference>
<dbReference type="InterPro" id="IPR006357">
    <property type="entry name" value="HAD-SF_hydro_IIA"/>
</dbReference>
<dbReference type="InterPro" id="IPR023214">
    <property type="entry name" value="HAD_sf"/>
</dbReference>
<dbReference type="InterPro" id="IPR006355">
    <property type="entry name" value="LHPP/HDHD2"/>
</dbReference>
<dbReference type="NCBIfam" id="TIGR01460">
    <property type="entry name" value="HAD-SF-IIA"/>
    <property type="match status" value="1"/>
</dbReference>
<dbReference type="NCBIfam" id="TIGR01458">
    <property type="entry name" value="HAD-SF-IIA-hyp3"/>
    <property type="match status" value="1"/>
</dbReference>
<dbReference type="PANTHER" id="PTHR19288">
    <property type="entry name" value="4-NITROPHENYLPHOSPHATASE-RELATED"/>
    <property type="match status" value="1"/>
</dbReference>
<dbReference type="PANTHER" id="PTHR19288:SF46">
    <property type="entry name" value="HALOACID DEHALOGENASE-LIKE HYDROLASE DOMAIN-CONTAINING PROTEIN 2"/>
    <property type="match status" value="1"/>
</dbReference>
<dbReference type="Pfam" id="PF13344">
    <property type="entry name" value="Hydrolase_6"/>
    <property type="match status" value="1"/>
</dbReference>
<dbReference type="Pfam" id="PF13242">
    <property type="entry name" value="Hydrolase_like"/>
    <property type="match status" value="1"/>
</dbReference>
<dbReference type="SFLD" id="SFLDG01139">
    <property type="entry name" value="C2.A:_Pyridoxal_Phosphate_Phos"/>
    <property type="match status" value="1"/>
</dbReference>
<dbReference type="SFLD" id="SFLDS00003">
    <property type="entry name" value="Haloacid_Dehalogenase"/>
    <property type="match status" value="1"/>
</dbReference>
<dbReference type="SUPFAM" id="SSF56784">
    <property type="entry name" value="HAD-like"/>
    <property type="match status" value="1"/>
</dbReference>
<feature type="chain" id="PRO_0000287205" description="Haloacid dehalogenase-like hydrolase domain-containing protein 2">
    <location>
        <begin position="1"/>
        <end position="259"/>
    </location>
</feature>
<feature type="coiled-coil region" evidence="3">
    <location>
        <begin position="47"/>
        <end position="71"/>
    </location>
</feature>
<feature type="binding site" evidence="1">
    <location>
        <begin position="13"/>
        <end position="15"/>
    </location>
    <ligand>
        <name>substrate</name>
    </ligand>
</feature>
<feature type="binding site" evidence="1">
    <location>
        <position position="13"/>
    </location>
    <ligand>
        <name>Mg(2+)</name>
        <dbReference type="ChEBI" id="CHEBI:18420"/>
    </ligand>
</feature>
<feature type="binding site" evidence="1">
    <location>
        <position position="15"/>
    </location>
    <ligand>
        <name>Mg(2+)</name>
        <dbReference type="ChEBI" id="CHEBI:18420"/>
    </ligand>
</feature>
<feature type="binding site" evidence="1">
    <location>
        <begin position="46"/>
        <end position="47"/>
    </location>
    <ligand>
        <name>substrate</name>
    </ligand>
</feature>
<feature type="binding site" evidence="1">
    <location>
        <position position="179"/>
    </location>
    <ligand>
        <name>substrate</name>
    </ligand>
</feature>
<feature type="binding site" evidence="1">
    <location>
        <position position="204"/>
    </location>
    <ligand>
        <name>Mg(2+)</name>
        <dbReference type="ChEBI" id="CHEBI:18420"/>
    </ligand>
</feature>
<feature type="modified residue" description="N6-succinyllysine" evidence="2">
    <location>
        <position position="50"/>
    </location>
</feature>
<accession>Q5R4B4</accession>
<evidence type="ECO:0000250" key="1"/>
<evidence type="ECO:0000250" key="2">
    <source>
        <dbReference type="UniProtKB" id="Q3UGR5"/>
    </source>
</evidence>
<evidence type="ECO:0000255" key="3"/>
<evidence type="ECO:0000305" key="4"/>
<organism>
    <name type="scientific">Pongo abelii</name>
    <name type="common">Sumatran orangutan</name>
    <name type="synonym">Pongo pygmaeus abelii</name>
    <dbReference type="NCBI Taxonomy" id="9601"/>
    <lineage>
        <taxon>Eukaryota</taxon>
        <taxon>Metazoa</taxon>
        <taxon>Chordata</taxon>
        <taxon>Craniata</taxon>
        <taxon>Vertebrata</taxon>
        <taxon>Euteleostomi</taxon>
        <taxon>Mammalia</taxon>
        <taxon>Eutheria</taxon>
        <taxon>Euarchontoglires</taxon>
        <taxon>Primates</taxon>
        <taxon>Haplorrhini</taxon>
        <taxon>Catarrhini</taxon>
        <taxon>Hominidae</taxon>
        <taxon>Pongo</taxon>
    </lineage>
</organism>
<keyword id="KW-0175">Coiled coil</keyword>
<keyword id="KW-0460">Magnesium</keyword>
<keyword id="KW-0479">Metal-binding</keyword>
<keyword id="KW-1185">Reference proteome</keyword>
<comment type="cofactor">
    <cofactor evidence="1">
        <name>Mg(2+)</name>
        <dbReference type="ChEBI" id="CHEBI:18420"/>
    </cofactor>
    <text evidence="1">Binds 1 Mg(2+) ion per subunit.</text>
</comment>
<comment type="similarity">
    <text evidence="4">Belongs to the HAD-like hydrolase superfamily.</text>
</comment>
<name>HDHD2_PONAB</name>
<reference key="1">
    <citation type="submission" date="2004-11" db="EMBL/GenBank/DDBJ databases">
        <authorList>
            <consortium name="The German cDNA consortium"/>
        </authorList>
    </citation>
    <scope>NUCLEOTIDE SEQUENCE [LARGE SCALE MRNA]</scope>
    <source>
        <tissue>Brain cortex</tissue>
    </source>
</reference>
<gene>
    <name type="primary">HDHD2</name>
</gene>
<sequence>MAACRALKAVLVDLSGTLHIEDAAVPGAQEALKRLRGTSVIVRFVTNTTKESKQDLLERLRKLEFDISEDEIFTSLTAARSLLEQKQVRPMLLVDDRALPDFKGIQTTDPNAVVMGLAPEHFHYQILNQAFRLLLDGAPLIAIHKARYYKRKDGLALGPGPFVTALEYATDTKATVVGKPEKTFFLEALRGTGCEPEEAVMIGDDCRDDVGGAQDVGMLGILVKTGKYRASDEEKINPPPYLTCESFPHAVDHILQHLL</sequence>
<proteinExistence type="evidence at transcript level"/>
<protein>
    <recommendedName>
        <fullName>Haloacid dehalogenase-like hydrolase domain-containing protein 2</fullName>
    </recommendedName>
</protein>